<sequence length="418" mass="47467">MHIFDELKERGLIFQTTDEEALRKALEEGQVSYYTGYDPTADSLHLGHLVAILTSRRLQLAGHKPYALVGGATGLIGDPSFKDAERSLQTKDTVDGWVKSIQGQLSRFLDFENGENKAVMVNNYDWFGSISFIDFLRDIGKYFTVNYMMSKESVKKRIETGISYTEFAYQIMQGYDFFVLNQDHNVTLQIGGSDQWGNMTAGTELLRRKADKTGHVITVPLITDATGKKFGKSEGNAVWLNPEKTSPYEMYQFWMNVMDADAVRFLKIFTFLSLDEIEDIRKQFEAAPHERLAQKVLAREVVTLVHGEEAYKEALNITEQLFAGNIKNLSVKELKQGLRGVPNYQVQADENNNIVELLVSSGIVNSKRQAREDVQNGAIYVNGDRIQDLDYVLSDADKLENELTVIRRGKKKYFVLTY</sequence>
<comment type="function">
    <text evidence="1">Catalyzes the attachment of tyrosine to tRNA(Tyr) in a two-step reaction: tyrosine is first activated by ATP to form Tyr-AMP and then transferred to the acceptor end of tRNA(Tyr).</text>
</comment>
<comment type="catalytic activity">
    <reaction evidence="1">
        <text>tRNA(Tyr) + L-tyrosine + ATP = L-tyrosyl-tRNA(Tyr) + AMP + diphosphate + H(+)</text>
        <dbReference type="Rhea" id="RHEA:10220"/>
        <dbReference type="Rhea" id="RHEA-COMP:9706"/>
        <dbReference type="Rhea" id="RHEA-COMP:9707"/>
        <dbReference type="ChEBI" id="CHEBI:15378"/>
        <dbReference type="ChEBI" id="CHEBI:30616"/>
        <dbReference type="ChEBI" id="CHEBI:33019"/>
        <dbReference type="ChEBI" id="CHEBI:58315"/>
        <dbReference type="ChEBI" id="CHEBI:78442"/>
        <dbReference type="ChEBI" id="CHEBI:78536"/>
        <dbReference type="ChEBI" id="CHEBI:456215"/>
        <dbReference type="EC" id="6.1.1.1"/>
    </reaction>
</comment>
<comment type="subunit">
    <text evidence="1">Homodimer.</text>
</comment>
<comment type="subcellular location">
    <subcellularLocation>
        <location evidence="1">Cytoplasm</location>
    </subcellularLocation>
</comment>
<comment type="similarity">
    <text evidence="1">Belongs to the class-I aminoacyl-tRNA synthetase family. TyrS type 1 subfamily.</text>
</comment>
<dbReference type="EC" id="6.1.1.1" evidence="1"/>
<dbReference type="EMBL" id="CP001015">
    <property type="protein sequence ID" value="ACF56251.1"/>
    <property type="molecule type" value="Genomic_DNA"/>
</dbReference>
<dbReference type="SMR" id="B5E3A7"/>
<dbReference type="KEGG" id="spx:SPG_2037"/>
<dbReference type="HOGENOM" id="CLU_024003_0_3_9"/>
<dbReference type="GO" id="GO:0005829">
    <property type="term" value="C:cytosol"/>
    <property type="evidence" value="ECO:0007669"/>
    <property type="project" value="TreeGrafter"/>
</dbReference>
<dbReference type="GO" id="GO:0005524">
    <property type="term" value="F:ATP binding"/>
    <property type="evidence" value="ECO:0007669"/>
    <property type="project" value="UniProtKB-UniRule"/>
</dbReference>
<dbReference type="GO" id="GO:0003723">
    <property type="term" value="F:RNA binding"/>
    <property type="evidence" value="ECO:0007669"/>
    <property type="project" value="UniProtKB-KW"/>
</dbReference>
<dbReference type="GO" id="GO:0004831">
    <property type="term" value="F:tyrosine-tRNA ligase activity"/>
    <property type="evidence" value="ECO:0007669"/>
    <property type="project" value="UniProtKB-UniRule"/>
</dbReference>
<dbReference type="GO" id="GO:0006437">
    <property type="term" value="P:tyrosyl-tRNA aminoacylation"/>
    <property type="evidence" value="ECO:0007669"/>
    <property type="project" value="UniProtKB-UniRule"/>
</dbReference>
<dbReference type="CDD" id="cd00165">
    <property type="entry name" value="S4"/>
    <property type="match status" value="1"/>
</dbReference>
<dbReference type="CDD" id="cd00805">
    <property type="entry name" value="TyrRS_core"/>
    <property type="match status" value="1"/>
</dbReference>
<dbReference type="FunFam" id="1.10.240.10:FF:000001">
    <property type="entry name" value="Tyrosine--tRNA ligase"/>
    <property type="match status" value="1"/>
</dbReference>
<dbReference type="FunFam" id="3.10.290.10:FF:000012">
    <property type="entry name" value="Tyrosine--tRNA ligase"/>
    <property type="match status" value="1"/>
</dbReference>
<dbReference type="FunFam" id="3.40.50.620:FF:000008">
    <property type="entry name" value="Tyrosine--tRNA ligase"/>
    <property type="match status" value="1"/>
</dbReference>
<dbReference type="Gene3D" id="3.40.50.620">
    <property type="entry name" value="HUPs"/>
    <property type="match status" value="1"/>
</dbReference>
<dbReference type="Gene3D" id="3.10.290.10">
    <property type="entry name" value="RNA-binding S4 domain"/>
    <property type="match status" value="1"/>
</dbReference>
<dbReference type="Gene3D" id="1.10.240.10">
    <property type="entry name" value="Tyrosyl-Transfer RNA Synthetase"/>
    <property type="match status" value="1"/>
</dbReference>
<dbReference type="HAMAP" id="MF_02006">
    <property type="entry name" value="Tyr_tRNA_synth_type1"/>
    <property type="match status" value="1"/>
</dbReference>
<dbReference type="InterPro" id="IPR001412">
    <property type="entry name" value="aa-tRNA-synth_I_CS"/>
</dbReference>
<dbReference type="InterPro" id="IPR002305">
    <property type="entry name" value="aa-tRNA-synth_Ic"/>
</dbReference>
<dbReference type="InterPro" id="IPR014729">
    <property type="entry name" value="Rossmann-like_a/b/a_fold"/>
</dbReference>
<dbReference type="InterPro" id="IPR002942">
    <property type="entry name" value="S4_RNA-bd"/>
</dbReference>
<dbReference type="InterPro" id="IPR036986">
    <property type="entry name" value="S4_RNA-bd_sf"/>
</dbReference>
<dbReference type="InterPro" id="IPR054608">
    <property type="entry name" value="SYY-like_C"/>
</dbReference>
<dbReference type="InterPro" id="IPR002307">
    <property type="entry name" value="Tyr-tRNA-ligase"/>
</dbReference>
<dbReference type="InterPro" id="IPR024088">
    <property type="entry name" value="Tyr-tRNA-ligase_bac-type"/>
</dbReference>
<dbReference type="InterPro" id="IPR024107">
    <property type="entry name" value="Tyr-tRNA-ligase_bac_1"/>
</dbReference>
<dbReference type="NCBIfam" id="TIGR00234">
    <property type="entry name" value="tyrS"/>
    <property type="match status" value="1"/>
</dbReference>
<dbReference type="PANTHER" id="PTHR11766:SF0">
    <property type="entry name" value="TYROSINE--TRNA LIGASE, MITOCHONDRIAL"/>
    <property type="match status" value="1"/>
</dbReference>
<dbReference type="PANTHER" id="PTHR11766">
    <property type="entry name" value="TYROSYL-TRNA SYNTHETASE"/>
    <property type="match status" value="1"/>
</dbReference>
<dbReference type="Pfam" id="PF22421">
    <property type="entry name" value="SYY_C-terminal"/>
    <property type="match status" value="1"/>
</dbReference>
<dbReference type="Pfam" id="PF00579">
    <property type="entry name" value="tRNA-synt_1b"/>
    <property type="match status" value="1"/>
</dbReference>
<dbReference type="PRINTS" id="PR01040">
    <property type="entry name" value="TRNASYNTHTYR"/>
</dbReference>
<dbReference type="SMART" id="SM00363">
    <property type="entry name" value="S4"/>
    <property type="match status" value="1"/>
</dbReference>
<dbReference type="SUPFAM" id="SSF55174">
    <property type="entry name" value="Alpha-L RNA-binding motif"/>
    <property type="match status" value="1"/>
</dbReference>
<dbReference type="SUPFAM" id="SSF52374">
    <property type="entry name" value="Nucleotidylyl transferase"/>
    <property type="match status" value="1"/>
</dbReference>
<dbReference type="PROSITE" id="PS00178">
    <property type="entry name" value="AA_TRNA_LIGASE_I"/>
    <property type="match status" value="1"/>
</dbReference>
<dbReference type="PROSITE" id="PS50889">
    <property type="entry name" value="S4"/>
    <property type="match status" value="1"/>
</dbReference>
<proteinExistence type="inferred from homology"/>
<feature type="chain" id="PRO_1000189335" description="Tyrosine--tRNA ligase">
    <location>
        <begin position="1"/>
        <end position="418"/>
    </location>
</feature>
<feature type="domain" description="S4 RNA-binding" evidence="1">
    <location>
        <begin position="352"/>
        <end position="418"/>
    </location>
</feature>
<feature type="short sequence motif" description="'HIGH' region">
    <location>
        <begin position="39"/>
        <end position="48"/>
    </location>
</feature>
<feature type="short sequence motif" description="'KMSKS' region">
    <location>
        <begin position="229"/>
        <end position="233"/>
    </location>
</feature>
<feature type="binding site" evidence="1">
    <location>
        <position position="34"/>
    </location>
    <ligand>
        <name>L-tyrosine</name>
        <dbReference type="ChEBI" id="CHEBI:58315"/>
    </ligand>
</feature>
<feature type="binding site" evidence="1">
    <location>
        <position position="169"/>
    </location>
    <ligand>
        <name>L-tyrosine</name>
        <dbReference type="ChEBI" id="CHEBI:58315"/>
    </ligand>
</feature>
<feature type="binding site" evidence="1">
    <location>
        <position position="173"/>
    </location>
    <ligand>
        <name>L-tyrosine</name>
        <dbReference type="ChEBI" id="CHEBI:58315"/>
    </ligand>
</feature>
<feature type="binding site" evidence="1">
    <location>
        <position position="232"/>
    </location>
    <ligand>
        <name>ATP</name>
        <dbReference type="ChEBI" id="CHEBI:30616"/>
    </ligand>
</feature>
<accession>B5E3A7</accession>
<name>SYY_STRP4</name>
<protein>
    <recommendedName>
        <fullName evidence="1">Tyrosine--tRNA ligase</fullName>
        <ecNumber evidence="1">6.1.1.1</ecNumber>
    </recommendedName>
    <alternativeName>
        <fullName evidence="1">Tyrosyl-tRNA synthetase</fullName>
        <shortName evidence="1">TyrRS</shortName>
    </alternativeName>
</protein>
<gene>
    <name evidence="1" type="primary">tyrS</name>
    <name type="ordered locus">SPG_2037</name>
</gene>
<reference key="1">
    <citation type="journal article" date="2001" name="Microb. Drug Resist.">
        <title>Annotated draft genomic sequence from a Streptococcus pneumoniae type 19F clinical isolate.</title>
        <authorList>
            <person name="Dopazo J."/>
            <person name="Mendoza A."/>
            <person name="Herrero J."/>
            <person name="Caldara F."/>
            <person name="Humbert Y."/>
            <person name="Friedli L."/>
            <person name="Guerrier M."/>
            <person name="Grand-Schenk E."/>
            <person name="Gandin C."/>
            <person name="de Francesco M."/>
            <person name="Polissi A."/>
            <person name="Buell G."/>
            <person name="Feger G."/>
            <person name="Garcia E."/>
            <person name="Peitsch M."/>
            <person name="Garcia-Bustos J.F."/>
        </authorList>
    </citation>
    <scope>NUCLEOTIDE SEQUENCE [LARGE SCALE GENOMIC DNA]</scope>
    <source>
        <strain>G54</strain>
    </source>
</reference>
<reference key="2">
    <citation type="submission" date="2008-03" db="EMBL/GenBank/DDBJ databases">
        <title>Pneumococcal beta glucoside metabolism investigated by whole genome comparison.</title>
        <authorList>
            <person name="Mulas L."/>
            <person name="Trappetti C."/>
            <person name="Hakenbeck R."/>
            <person name="Iannelli F."/>
            <person name="Pozzi G."/>
            <person name="Davidsen T.M."/>
            <person name="Tettelin H."/>
            <person name="Oggioni M."/>
        </authorList>
    </citation>
    <scope>NUCLEOTIDE SEQUENCE [LARGE SCALE GENOMIC DNA]</scope>
    <source>
        <strain>G54</strain>
    </source>
</reference>
<keyword id="KW-0030">Aminoacyl-tRNA synthetase</keyword>
<keyword id="KW-0067">ATP-binding</keyword>
<keyword id="KW-0963">Cytoplasm</keyword>
<keyword id="KW-0436">Ligase</keyword>
<keyword id="KW-0547">Nucleotide-binding</keyword>
<keyword id="KW-0648">Protein biosynthesis</keyword>
<keyword id="KW-0694">RNA-binding</keyword>
<evidence type="ECO:0000255" key="1">
    <source>
        <dbReference type="HAMAP-Rule" id="MF_02006"/>
    </source>
</evidence>
<organism>
    <name type="scientific">Streptococcus pneumoniae serotype 19F (strain G54)</name>
    <dbReference type="NCBI Taxonomy" id="512566"/>
    <lineage>
        <taxon>Bacteria</taxon>
        <taxon>Bacillati</taxon>
        <taxon>Bacillota</taxon>
        <taxon>Bacilli</taxon>
        <taxon>Lactobacillales</taxon>
        <taxon>Streptococcaceae</taxon>
        <taxon>Streptococcus</taxon>
    </lineage>
</organism>